<accession>P0A7I2</accession>
<accession>P07011</accession>
<accession>P77340</accession>
<keyword id="KW-0963">Cytoplasm</keyword>
<keyword id="KW-0488">Methylation</keyword>
<keyword id="KW-0648">Protein biosynthesis</keyword>
<keyword id="KW-1185">Reference proteome</keyword>
<comment type="function">
    <text evidence="1">Peptide chain release factor 1 directs the termination of translation in response to the peptide chain termination codons UAG and UAA.</text>
</comment>
<comment type="subcellular location">
    <subcellularLocation>
        <location evidence="1">Cytoplasm</location>
    </subcellularLocation>
</comment>
<comment type="PTM">
    <text evidence="1">Methylated by PrmC. Methylation increases the termination efficiency of RF1 (By similarity).</text>
</comment>
<comment type="similarity">
    <text evidence="3">Belongs to the prokaryotic/mitochondrial release factor family.</text>
</comment>
<organism>
    <name type="scientific">Escherichia coli O157:H7</name>
    <dbReference type="NCBI Taxonomy" id="83334"/>
    <lineage>
        <taxon>Bacteria</taxon>
        <taxon>Pseudomonadati</taxon>
        <taxon>Pseudomonadota</taxon>
        <taxon>Gammaproteobacteria</taxon>
        <taxon>Enterobacterales</taxon>
        <taxon>Enterobacteriaceae</taxon>
        <taxon>Escherichia</taxon>
    </lineage>
</organism>
<evidence type="ECO:0000250" key="1"/>
<evidence type="ECO:0000256" key="2">
    <source>
        <dbReference type="SAM" id="MobiDB-lite"/>
    </source>
</evidence>
<evidence type="ECO:0000305" key="3"/>
<feature type="chain" id="PRO_0000177669" description="Peptide chain release factor 1">
    <location>
        <begin position="1"/>
        <end position="360"/>
    </location>
</feature>
<feature type="region of interest" description="Disordered" evidence="2">
    <location>
        <begin position="284"/>
        <end position="313"/>
    </location>
</feature>
<feature type="modified residue" description="N5-methylglutamine" evidence="1">
    <location>
        <position position="235"/>
    </location>
</feature>
<feature type="sequence conflict" description="In Ref. 1; AAG56069." evidence="3" ref="1">
    <original>R</original>
    <variation>P</variation>
    <location>
        <position position="50"/>
    </location>
</feature>
<gene>
    <name type="primary">prfA</name>
    <name type="ordered locus">Z1982</name>
    <name type="ordered locus">ECs1716</name>
</gene>
<protein>
    <recommendedName>
        <fullName>Peptide chain release factor 1</fullName>
        <shortName>RF-1</shortName>
    </recommendedName>
</protein>
<sequence>MKPSIVAKLEALHERHEEVQALLGDAQTIADQERFRALSREYAQLSDVSRCFTDWQQVQEDIETAQMMLDDPEMREMAQDELREAKEKSEQLEQQLQVLLLPKDPDDERNAFLEVRAGTGGDEAALFAGDLFRMYSRYAEARRWRVEIMSASEGEHGGYKEIIAKISGDGVYGRLKFESGGHRVQRVPATESQGRIHTSACTVAVMPELPDAELPDINPADLRIDTFRSSGAGGQHVNTTDSAIRITHLPTGIVVECQDERSQHKNKAKALSVLGARIHAAEMAKRQQAEASTRRNLLGSGDRSDRNRTYNFPQGRVTDHRINLTLYRLDEVMEGKLDMLIEPIIQEHQADQLAALSEQE</sequence>
<name>RF1_ECO57</name>
<reference key="1">
    <citation type="journal article" date="2001" name="Nature">
        <title>Genome sequence of enterohaemorrhagic Escherichia coli O157:H7.</title>
        <authorList>
            <person name="Perna N.T."/>
            <person name="Plunkett G. III"/>
            <person name="Burland V."/>
            <person name="Mau B."/>
            <person name="Glasner J.D."/>
            <person name="Rose D.J."/>
            <person name="Mayhew G.F."/>
            <person name="Evans P.S."/>
            <person name="Gregor J."/>
            <person name="Kirkpatrick H.A."/>
            <person name="Posfai G."/>
            <person name="Hackett J."/>
            <person name="Klink S."/>
            <person name="Boutin A."/>
            <person name="Shao Y."/>
            <person name="Miller L."/>
            <person name="Grotbeck E.J."/>
            <person name="Davis N.W."/>
            <person name="Lim A."/>
            <person name="Dimalanta E.T."/>
            <person name="Potamousis K."/>
            <person name="Apodaca J."/>
            <person name="Anantharaman T.S."/>
            <person name="Lin J."/>
            <person name="Yen G."/>
            <person name="Schwartz D.C."/>
            <person name="Welch R.A."/>
            <person name="Blattner F.R."/>
        </authorList>
    </citation>
    <scope>NUCLEOTIDE SEQUENCE [LARGE SCALE GENOMIC DNA]</scope>
    <source>
        <strain>O157:H7 / EDL933 / ATCC 700927 / EHEC</strain>
    </source>
</reference>
<reference key="2">
    <citation type="journal article" date="2001" name="DNA Res.">
        <title>Complete genome sequence of enterohemorrhagic Escherichia coli O157:H7 and genomic comparison with a laboratory strain K-12.</title>
        <authorList>
            <person name="Hayashi T."/>
            <person name="Makino K."/>
            <person name="Ohnishi M."/>
            <person name="Kurokawa K."/>
            <person name="Ishii K."/>
            <person name="Yokoyama K."/>
            <person name="Han C.-G."/>
            <person name="Ohtsubo E."/>
            <person name="Nakayama K."/>
            <person name="Murata T."/>
            <person name="Tanaka M."/>
            <person name="Tobe T."/>
            <person name="Iida T."/>
            <person name="Takami H."/>
            <person name="Honda T."/>
            <person name="Sasakawa C."/>
            <person name="Ogasawara N."/>
            <person name="Yasunaga T."/>
            <person name="Kuhara S."/>
            <person name="Shiba T."/>
            <person name="Hattori M."/>
            <person name="Shinagawa H."/>
        </authorList>
    </citation>
    <scope>NUCLEOTIDE SEQUENCE [LARGE SCALE GENOMIC DNA]</scope>
    <source>
        <strain>O157:H7 / Sakai / RIMD 0509952 / EHEC</strain>
    </source>
</reference>
<dbReference type="EMBL" id="AE005174">
    <property type="protein sequence ID" value="AAG56069.1"/>
    <property type="molecule type" value="Genomic_DNA"/>
</dbReference>
<dbReference type="EMBL" id="BA000007">
    <property type="protein sequence ID" value="BAB35139.1"/>
    <property type="molecule type" value="Genomic_DNA"/>
</dbReference>
<dbReference type="PIR" id="A85701">
    <property type="entry name" value="A85701"/>
</dbReference>
<dbReference type="PIR" id="D90843">
    <property type="entry name" value="D90843"/>
</dbReference>
<dbReference type="RefSeq" id="NP_309743.1">
    <property type="nucleotide sequence ID" value="NC_002695.1"/>
</dbReference>
<dbReference type="RefSeq" id="WP_000804726.1">
    <property type="nucleotide sequence ID" value="NZ_VOAI01000038.1"/>
</dbReference>
<dbReference type="SMR" id="P0A7I2"/>
<dbReference type="STRING" id="155864.Z1982"/>
<dbReference type="GeneID" id="913147"/>
<dbReference type="GeneID" id="93775276"/>
<dbReference type="KEGG" id="ece:Z1982"/>
<dbReference type="KEGG" id="ecs:ECs_1716"/>
<dbReference type="PATRIC" id="fig|386585.9.peg.1814"/>
<dbReference type="eggNOG" id="COG0216">
    <property type="taxonomic scope" value="Bacteria"/>
</dbReference>
<dbReference type="HOGENOM" id="CLU_036856_0_1_6"/>
<dbReference type="OMA" id="DHRVGFK"/>
<dbReference type="Proteomes" id="UP000000558">
    <property type="component" value="Chromosome"/>
</dbReference>
<dbReference type="Proteomes" id="UP000002519">
    <property type="component" value="Chromosome"/>
</dbReference>
<dbReference type="GO" id="GO:0005737">
    <property type="term" value="C:cytoplasm"/>
    <property type="evidence" value="ECO:0007669"/>
    <property type="project" value="UniProtKB-SubCell"/>
</dbReference>
<dbReference type="GO" id="GO:0016149">
    <property type="term" value="F:translation release factor activity, codon specific"/>
    <property type="evidence" value="ECO:0007669"/>
    <property type="project" value="UniProtKB-UniRule"/>
</dbReference>
<dbReference type="FunFam" id="3.30.160.20:FF:000004">
    <property type="entry name" value="Peptide chain release factor 1"/>
    <property type="match status" value="1"/>
</dbReference>
<dbReference type="FunFam" id="3.30.70.1660:FF:000002">
    <property type="entry name" value="Peptide chain release factor 1"/>
    <property type="match status" value="1"/>
</dbReference>
<dbReference type="FunFam" id="3.30.70.1660:FF:000004">
    <property type="entry name" value="Peptide chain release factor 1"/>
    <property type="match status" value="1"/>
</dbReference>
<dbReference type="Gene3D" id="3.30.160.20">
    <property type="match status" value="1"/>
</dbReference>
<dbReference type="Gene3D" id="3.30.70.1660">
    <property type="match status" value="1"/>
</dbReference>
<dbReference type="Gene3D" id="6.10.140.1950">
    <property type="match status" value="1"/>
</dbReference>
<dbReference type="HAMAP" id="MF_00093">
    <property type="entry name" value="Rel_fac_1"/>
    <property type="match status" value="1"/>
</dbReference>
<dbReference type="InterPro" id="IPR005139">
    <property type="entry name" value="PCRF"/>
</dbReference>
<dbReference type="InterPro" id="IPR000352">
    <property type="entry name" value="Pep_chain_release_fac_I"/>
</dbReference>
<dbReference type="InterPro" id="IPR045853">
    <property type="entry name" value="Pep_chain_release_fac_I_sf"/>
</dbReference>
<dbReference type="InterPro" id="IPR050057">
    <property type="entry name" value="Prokaryotic/Mito_RF"/>
</dbReference>
<dbReference type="InterPro" id="IPR004373">
    <property type="entry name" value="RF-1"/>
</dbReference>
<dbReference type="NCBIfam" id="TIGR00019">
    <property type="entry name" value="prfA"/>
    <property type="match status" value="1"/>
</dbReference>
<dbReference type="NCBIfam" id="NF001859">
    <property type="entry name" value="PRK00591.1"/>
    <property type="match status" value="1"/>
</dbReference>
<dbReference type="PANTHER" id="PTHR43804">
    <property type="entry name" value="LD18447P"/>
    <property type="match status" value="1"/>
</dbReference>
<dbReference type="PANTHER" id="PTHR43804:SF7">
    <property type="entry name" value="LD18447P"/>
    <property type="match status" value="1"/>
</dbReference>
<dbReference type="Pfam" id="PF03462">
    <property type="entry name" value="PCRF"/>
    <property type="match status" value="1"/>
</dbReference>
<dbReference type="Pfam" id="PF00472">
    <property type="entry name" value="RF-1"/>
    <property type="match status" value="1"/>
</dbReference>
<dbReference type="SMART" id="SM00937">
    <property type="entry name" value="PCRF"/>
    <property type="match status" value="1"/>
</dbReference>
<dbReference type="SUPFAM" id="SSF75620">
    <property type="entry name" value="Release factor"/>
    <property type="match status" value="1"/>
</dbReference>
<dbReference type="PROSITE" id="PS00745">
    <property type="entry name" value="RF_PROK_I"/>
    <property type="match status" value="1"/>
</dbReference>
<proteinExistence type="inferred from homology"/>